<proteinExistence type="evidence at protein level"/>
<reference key="1">
    <citation type="journal article" date="2004" name="Nat. Genet.">
        <title>Complete sequencing and characterization of 21,243 full-length human cDNAs.</title>
        <authorList>
            <person name="Ota T."/>
            <person name="Suzuki Y."/>
            <person name="Nishikawa T."/>
            <person name="Otsuki T."/>
            <person name="Sugiyama T."/>
            <person name="Irie R."/>
            <person name="Wakamatsu A."/>
            <person name="Hayashi K."/>
            <person name="Sato H."/>
            <person name="Nagai K."/>
            <person name="Kimura K."/>
            <person name="Makita H."/>
            <person name="Sekine M."/>
            <person name="Obayashi M."/>
            <person name="Nishi T."/>
            <person name="Shibahara T."/>
            <person name="Tanaka T."/>
            <person name="Ishii S."/>
            <person name="Yamamoto J."/>
            <person name="Saito K."/>
            <person name="Kawai Y."/>
            <person name="Isono Y."/>
            <person name="Nakamura Y."/>
            <person name="Nagahari K."/>
            <person name="Murakami K."/>
            <person name="Yasuda T."/>
            <person name="Iwayanagi T."/>
            <person name="Wagatsuma M."/>
            <person name="Shiratori A."/>
            <person name="Sudo H."/>
            <person name="Hosoiri T."/>
            <person name="Kaku Y."/>
            <person name="Kodaira H."/>
            <person name="Kondo H."/>
            <person name="Sugawara M."/>
            <person name="Takahashi M."/>
            <person name="Kanda K."/>
            <person name="Yokoi T."/>
            <person name="Furuya T."/>
            <person name="Kikkawa E."/>
            <person name="Omura Y."/>
            <person name="Abe K."/>
            <person name="Kamihara K."/>
            <person name="Katsuta N."/>
            <person name="Sato K."/>
            <person name="Tanikawa M."/>
            <person name="Yamazaki M."/>
            <person name="Ninomiya K."/>
            <person name="Ishibashi T."/>
            <person name="Yamashita H."/>
            <person name="Murakawa K."/>
            <person name="Fujimori K."/>
            <person name="Tanai H."/>
            <person name="Kimata M."/>
            <person name="Watanabe M."/>
            <person name="Hiraoka S."/>
            <person name="Chiba Y."/>
            <person name="Ishida S."/>
            <person name="Ono Y."/>
            <person name="Takiguchi S."/>
            <person name="Watanabe S."/>
            <person name="Yosida M."/>
            <person name="Hotuta T."/>
            <person name="Kusano J."/>
            <person name="Kanehori K."/>
            <person name="Takahashi-Fujii A."/>
            <person name="Hara H."/>
            <person name="Tanase T.-O."/>
            <person name="Nomura Y."/>
            <person name="Togiya S."/>
            <person name="Komai F."/>
            <person name="Hara R."/>
            <person name="Takeuchi K."/>
            <person name="Arita M."/>
            <person name="Imose N."/>
            <person name="Musashino K."/>
            <person name="Yuuki H."/>
            <person name="Oshima A."/>
            <person name="Sasaki N."/>
            <person name="Aotsuka S."/>
            <person name="Yoshikawa Y."/>
            <person name="Matsunawa H."/>
            <person name="Ichihara T."/>
            <person name="Shiohata N."/>
            <person name="Sano S."/>
            <person name="Moriya S."/>
            <person name="Momiyama H."/>
            <person name="Satoh N."/>
            <person name="Takami S."/>
            <person name="Terashima Y."/>
            <person name="Suzuki O."/>
            <person name="Nakagawa S."/>
            <person name="Senoh A."/>
            <person name="Mizoguchi H."/>
            <person name="Goto Y."/>
            <person name="Shimizu F."/>
            <person name="Wakebe H."/>
            <person name="Hishigaki H."/>
            <person name="Watanabe T."/>
            <person name="Sugiyama A."/>
            <person name="Takemoto M."/>
            <person name="Kawakami B."/>
            <person name="Yamazaki M."/>
            <person name="Watanabe K."/>
            <person name="Kumagai A."/>
            <person name="Itakura S."/>
            <person name="Fukuzumi Y."/>
            <person name="Fujimori Y."/>
            <person name="Komiyama M."/>
            <person name="Tashiro H."/>
            <person name="Tanigami A."/>
            <person name="Fujiwara T."/>
            <person name="Ono T."/>
            <person name="Yamada K."/>
            <person name="Fujii Y."/>
            <person name="Ozaki K."/>
            <person name="Hirao M."/>
            <person name="Ohmori Y."/>
            <person name="Kawabata A."/>
            <person name="Hikiji T."/>
            <person name="Kobatake N."/>
            <person name="Inagaki H."/>
            <person name="Ikema Y."/>
            <person name="Okamoto S."/>
            <person name="Okitani R."/>
            <person name="Kawakami T."/>
            <person name="Noguchi S."/>
            <person name="Itoh T."/>
            <person name="Shigeta K."/>
            <person name="Senba T."/>
            <person name="Matsumura K."/>
            <person name="Nakajima Y."/>
            <person name="Mizuno T."/>
            <person name="Morinaga M."/>
            <person name="Sasaki M."/>
            <person name="Togashi T."/>
            <person name="Oyama M."/>
            <person name="Hata H."/>
            <person name="Watanabe M."/>
            <person name="Komatsu T."/>
            <person name="Mizushima-Sugano J."/>
            <person name="Satoh T."/>
            <person name="Shirai Y."/>
            <person name="Takahashi Y."/>
            <person name="Nakagawa K."/>
            <person name="Okumura K."/>
            <person name="Nagase T."/>
            <person name="Nomura N."/>
            <person name="Kikuchi H."/>
            <person name="Masuho Y."/>
            <person name="Yamashita R."/>
            <person name="Nakai K."/>
            <person name="Yada T."/>
            <person name="Nakamura Y."/>
            <person name="Ohara O."/>
            <person name="Isogai T."/>
            <person name="Sugano S."/>
        </authorList>
    </citation>
    <scope>NUCLEOTIDE SEQUENCE [LARGE SCALE MRNA]</scope>
</reference>
<reference key="2">
    <citation type="submission" date="2004-06" db="EMBL/GenBank/DDBJ databases">
        <title>Cloning of human full open reading frames in Gateway(TM) system entry vector (pDONR201).</title>
        <authorList>
            <person name="Ebert L."/>
            <person name="Schick M."/>
            <person name="Neubert P."/>
            <person name="Schatten R."/>
            <person name="Henze S."/>
            <person name="Korn B."/>
        </authorList>
    </citation>
    <scope>NUCLEOTIDE SEQUENCE [LARGE SCALE MRNA]</scope>
</reference>
<reference key="3">
    <citation type="submission" date="2005-07" db="EMBL/GenBank/DDBJ databases">
        <authorList>
            <person name="Mural R.J."/>
            <person name="Istrail S."/>
            <person name="Sutton G.G."/>
            <person name="Florea L."/>
            <person name="Halpern A.L."/>
            <person name="Mobarry C.M."/>
            <person name="Lippert R."/>
            <person name="Walenz B."/>
            <person name="Shatkay H."/>
            <person name="Dew I."/>
            <person name="Miller J.R."/>
            <person name="Flanigan M.J."/>
            <person name="Edwards N.J."/>
            <person name="Bolanos R."/>
            <person name="Fasulo D."/>
            <person name="Halldorsson B.V."/>
            <person name="Hannenhalli S."/>
            <person name="Turner R."/>
            <person name="Yooseph S."/>
            <person name="Lu F."/>
            <person name="Nusskern D.R."/>
            <person name="Shue B.C."/>
            <person name="Zheng X.H."/>
            <person name="Zhong F."/>
            <person name="Delcher A.L."/>
            <person name="Huson D.H."/>
            <person name="Kravitz S.A."/>
            <person name="Mouchard L."/>
            <person name="Reinert K."/>
            <person name="Remington K.A."/>
            <person name="Clark A.G."/>
            <person name="Waterman M.S."/>
            <person name="Eichler E.E."/>
            <person name="Adams M.D."/>
            <person name="Hunkapiller M.W."/>
            <person name="Myers E.W."/>
            <person name="Venter J.C."/>
        </authorList>
    </citation>
    <scope>NUCLEOTIDE SEQUENCE [LARGE SCALE GENOMIC DNA]</scope>
</reference>
<reference key="4">
    <citation type="journal article" date="2004" name="Genome Res.">
        <title>The status, quality, and expansion of the NIH full-length cDNA project: the Mammalian Gene Collection (MGC).</title>
        <authorList>
            <consortium name="The MGC Project Team"/>
        </authorList>
    </citation>
    <scope>NUCLEOTIDE SEQUENCE [LARGE SCALE MRNA]</scope>
    <source>
        <tissue>Placenta</tissue>
    </source>
</reference>
<reference key="5">
    <citation type="journal article" date="2006" name="J. Proteome Res.">
        <title>Proteomic and bioinformatic characterization of the biogenesis and function of melanosomes.</title>
        <authorList>
            <person name="Chi A."/>
            <person name="Valencia J.C."/>
            <person name="Hu Z.-Z."/>
            <person name="Watabe H."/>
            <person name="Yamaguchi H."/>
            <person name="Mangini N.J."/>
            <person name="Huang H."/>
            <person name="Canfield V.A."/>
            <person name="Cheng K.C."/>
            <person name="Yang F."/>
            <person name="Abe R."/>
            <person name="Yamagishi S."/>
            <person name="Shabanowitz J."/>
            <person name="Hearing V.J."/>
            <person name="Wu C."/>
            <person name="Appella E."/>
            <person name="Hunt D.F."/>
        </authorList>
    </citation>
    <scope>SUBCELLULAR LOCATION [LARGE SCALE ANALYSIS]</scope>
    <source>
        <tissue>Melanoma</tissue>
    </source>
</reference>
<reference key="6">
    <citation type="journal article" date="2011" name="BMC Syst. Biol.">
        <title>Initial characterization of the human central proteome.</title>
        <authorList>
            <person name="Burkard T.R."/>
            <person name="Planyavsky M."/>
            <person name="Kaupe I."/>
            <person name="Breitwieser F.P."/>
            <person name="Buerckstuemmer T."/>
            <person name="Bennett K.L."/>
            <person name="Superti-Furga G."/>
            <person name="Colinge J."/>
        </authorList>
    </citation>
    <scope>IDENTIFICATION BY MASS SPECTROMETRY [LARGE SCALE ANALYSIS]</scope>
</reference>
<reference key="7">
    <citation type="journal article" date="2012" name="Mol. Cell. Proteomics">
        <title>Comparative large-scale characterisation of plant vs. mammal proteins reveals similar and idiosyncratic N-alpha acetylation features.</title>
        <authorList>
            <person name="Bienvenut W.V."/>
            <person name="Sumpton D."/>
            <person name="Martinez A."/>
            <person name="Lilla S."/>
            <person name="Espagne C."/>
            <person name="Meinnel T."/>
            <person name="Giglione C."/>
        </authorList>
    </citation>
    <scope>ACETYLATION [LARGE SCALE ANALYSIS] AT ALA-2</scope>
    <scope>CLEAVAGE OF INITIATOR METHIONINE [LARGE SCALE ANALYSIS]</scope>
    <scope>IDENTIFICATION BY MASS SPECTROMETRY [LARGE SCALE ANALYSIS]</scope>
</reference>
<reference key="8">
    <citation type="journal article" date="2014" name="Kobe J. Med. Sci.">
        <title>Identification and characterization of TMEM33 as a reticulon-binding protein.</title>
        <authorList>
            <person name="Urade T."/>
            <person name="Yamamoto Y."/>
            <person name="Zhang X."/>
            <person name="Ku Y."/>
            <person name="Sakisaka T."/>
        </authorList>
    </citation>
    <scope>IDENTIFICATION BY MASS SPECTROMETRY</scope>
    <scope>FUNCTION</scope>
    <scope>SUBCELLULAR LOCATION</scope>
    <scope>INTERACTION WITH RTN1; RTN3; RTN3; RTN4 AND ARL6IP1</scope>
</reference>
<reference key="9">
    <citation type="journal article" date="2015" name="Breast Cancer Res. Treat.">
        <title>TMEM33: a new stress-inducible endoplasmic reticulum transmembrane protein and modulator of the unfolded protein response signaling.</title>
        <authorList>
            <person name="Sakabe I."/>
            <person name="Hu R."/>
            <person name="Jin L."/>
            <person name="Clarke R."/>
            <person name="Kasid U.N."/>
        </authorList>
    </citation>
    <scope>FUNCTION</scope>
    <scope>SUBCELLULAR LOCATION</scope>
    <scope>TOPOLOGY</scope>
    <scope>INTERACTION WITH EIF2AK3</scope>
    <scope>TISSUE SPECIFICITY</scope>
    <scope>INDUCTION</scope>
</reference>
<reference key="10">
    <citation type="journal article" date="2015" name="Proteomics">
        <title>N-terminome analysis of the human mitochondrial proteome.</title>
        <authorList>
            <person name="Vaca Jacome A.S."/>
            <person name="Rabilloud T."/>
            <person name="Schaeffer-Reiss C."/>
            <person name="Rompais M."/>
            <person name="Ayoub D."/>
            <person name="Lane L."/>
            <person name="Bairoch A."/>
            <person name="Van Dorsselaer A."/>
            <person name="Carapito C."/>
        </authorList>
    </citation>
    <scope>IDENTIFICATION BY MASS SPECTROMETRY [LARGE SCALE ANALYSIS]</scope>
</reference>
<reference key="11">
    <citation type="journal article" date="2019" name="Nat. Commun.">
        <title>tmem33 is essential for VEGF-mediated endothelial calcium oscillations and angiogenesis.</title>
        <authorList>
            <person name="Savage A.M."/>
            <person name="Kurusamy S."/>
            <person name="Chen Y."/>
            <person name="Jiang Z."/>
            <person name="Chhabria K."/>
            <person name="MacDonald R.B."/>
            <person name="Kim H.R."/>
            <person name="Wilson H.L."/>
            <person name="van Eeden F.J.M."/>
            <person name="Armesilla A.L."/>
            <person name="Chico T.J.A."/>
            <person name="Wilkinson R.N."/>
        </authorList>
    </citation>
    <scope>FUNCTION</scope>
</reference>
<reference key="12">
    <citation type="journal article" date="2020" name="Elife">
        <title>Interaction mapping of endoplasmic reticulum ubiquitin ligases identifies modulators of innate immune signalling.</title>
        <authorList>
            <person name="Fenech E.J."/>
            <person name="Lari F."/>
            <person name="Charles P.D."/>
            <person name="Fischer R."/>
            <person name="Laetitia-Thezenas M."/>
            <person name="Bagola K."/>
            <person name="Paton A.W."/>
            <person name="Paton J.C."/>
            <person name="Gyrd-Hansen M."/>
            <person name="Kessler B.M."/>
            <person name="Christianson J.C."/>
        </authorList>
    </citation>
    <scope>FUNCTION</scope>
    <scope>INTERACTION WITH RNF26</scope>
</reference>
<reference key="13">
    <citation type="journal article" date="2021" name="EMBO J.">
        <title>PKM2-TMEM33 axis regulates lipid homeostasis in cancer cells by controlling SCAP stability.</title>
        <authorList>
            <person name="Liu F."/>
            <person name="Ma M."/>
            <person name="Gao A."/>
            <person name="Ma F."/>
            <person name="Ma G."/>
            <person name="Liu P."/>
            <person name="Jia C."/>
            <person name="Wang Y."/>
            <person name="Donahue K."/>
            <person name="Zhang S."/>
            <person name="Ong I.M."/>
            <person name="Keles S."/>
            <person name="Li L."/>
            <person name="Xu W."/>
        </authorList>
    </citation>
    <scope>FUNCTION</scope>
    <scope>INTERACTION WITH RNF5</scope>
</reference>
<evidence type="ECO:0000250" key="1">
    <source>
        <dbReference type="UniProtKB" id="Q9CR67"/>
    </source>
</evidence>
<evidence type="ECO:0000255" key="2"/>
<evidence type="ECO:0000269" key="3">
    <source>
    </source>
</evidence>
<evidence type="ECO:0000269" key="4">
    <source>
    </source>
</evidence>
<evidence type="ECO:0000269" key="5">
    <source>
    </source>
</evidence>
<evidence type="ECO:0000269" key="6">
    <source>
    </source>
</evidence>
<evidence type="ECO:0000269" key="7">
    <source>
    </source>
</evidence>
<evidence type="ECO:0000269" key="8">
    <source>
    </source>
</evidence>
<evidence type="ECO:0000303" key="9">
    <source>
    </source>
</evidence>
<evidence type="ECO:0000305" key="10"/>
<evidence type="ECO:0000305" key="11">
    <source>
    </source>
</evidence>
<evidence type="ECO:0007744" key="12">
    <source>
    </source>
</evidence>
<keyword id="KW-0007">Acetylation</keyword>
<keyword id="KW-0256">Endoplasmic reticulum</keyword>
<keyword id="KW-0391">Immunity</keyword>
<keyword id="KW-0399">Innate immunity</keyword>
<keyword id="KW-0472">Membrane</keyword>
<keyword id="KW-0539">Nucleus</keyword>
<keyword id="KW-1267">Proteomics identification</keyword>
<keyword id="KW-1185">Reference proteome</keyword>
<keyword id="KW-0812">Transmembrane</keyword>
<keyword id="KW-1133">Transmembrane helix</keyword>
<organism>
    <name type="scientific">Homo sapiens</name>
    <name type="common">Human</name>
    <dbReference type="NCBI Taxonomy" id="9606"/>
    <lineage>
        <taxon>Eukaryota</taxon>
        <taxon>Metazoa</taxon>
        <taxon>Chordata</taxon>
        <taxon>Craniata</taxon>
        <taxon>Vertebrata</taxon>
        <taxon>Euteleostomi</taxon>
        <taxon>Mammalia</taxon>
        <taxon>Eutheria</taxon>
        <taxon>Euarchontoglires</taxon>
        <taxon>Primates</taxon>
        <taxon>Haplorrhini</taxon>
        <taxon>Catarrhini</taxon>
        <taxon>Hominidae</taxon>
        <taxon>Homo</taxon>
    </lineage>
</organism>
<gene>
    <name type="primary">TMEM33</name>
    <name type="synonym">DB83</name>
</gene>
<accession>P57088</accession>
<accession>B3KSS8</accession>
<accession>Q9H953</accession>
<comment type="function">
    <text evidence="1 4 5 6 7 8">Acts as a regulator of the tubular endoplasmic reticulum (ER) network by modulating intracellular calcium homeostasis. Mechanistically, stimulates PKD2 calcium-dependent activity (By similarity). Suppresses the RTN3/4-induced formation of the ER tubules (PubMed:25612671). Positively regulates PERK-mediated and IRE1-mediated unfolded protein response signaling (PubMed:26268696). Plays an essential role in VEGF-mediated release of Ca(2+) from ER stores during angiogenesis (PubMed:30760708). Also plays a role in the modulation of innate immune signaling through the cGAS-STING pathway by interacting with RNF26 (PubMed:32614325). Participates in lipid metabolism by acting as a downstream effector of the pyruvate kinase/PKM. Forms a complex with RNF5 to facilitate polyubiquitination and subsequent degradation of SCAP on the ER membrane (PubMed:34487377).</text>
</comment>
<comment type="subunit">
    <text evidence="1 4 5 7 8">Interacts with EIF2AK3 (PubMed:26268696). Interacts with ARL6IP1, isoform RTN1-A of RTN1, isoform RTN2-B of RTN2, isoform 3 of RTN3 and isoform 3 of RTN4 (PubMed:25612671). Interacts with RNF5 (PubMed:34487377). Interacts with RNF26 (PubMed:32614325). Interacts with PKD2 (By similarity).</text>
</comment>
<comment type="interaction">
    <interactant intactId="EBI-1048629">
        <id>P57088</id>
    </interactant>
    <interactant intactId="EBI-1188238">
        <id>P48039</id>
        <label>MTNR1A</label>
    </interactant>
    <organismsDiffer>false</organismsDiffer>
    <experiments>3</experiments>
</comment>
<comment type="interaction">
    <interactant intactId="EBI-1048629">
        <id>P57088</id>
    </interactant>
    <interactant intactId="EBI-2857623">
        <id>Q96FB2</id>
    </interactant>
    <organismsDiffer>false</organismsDiffer>
    <experiments>3</experiments>
</comment>
<comment type="subcellular location">
    <subcellularLocation>
        <location evidence="4 5">Endoplasmic reticulum membrane</location>
        <topology evidence="2">Multi-pass membrane protein</topology>
    </subcellularLocation>
    <subcellularLocation>
        <location evidence="3">Melanosome</location>
    </subcellularLocation>
    <subcellularLocation>
        <location evidence="4">Nucleus envelope</location>
    </subcellularLocation>
    <text evidence="3 4">Identified by mass spectrometry in melanosome fractions from stage I to stage IV. Co-localizes with RTN4 at the ER sheets.</text>
</comment>
<comment type="tissue specificity">
    <text evidence="5">Prostate cancer and several cancer cell lines (at protein level). Widely expressed. Expressed at higher levels in endocrine-resistant breast cancer cells as compared to endocrine-sensitive breast cancer cells. Expressed at higher levels in early recurrence breast cancer tissues as compared to non-recurrent breast tumors.</text>
</comment>
<comment type="induction">
    <text evidence="5">By endoplasmic reticulum (ER) stress.</text>
</comment>
<comment type="similarity">
    <text evidence="10">Belongs to the PER33/POM33 family.</text>
</comment>
<feature type="initiator methionine" description="Removed" evidence="12">
    <location>
        <position position="1"/>
    </location>
</feature>
<feature type="chain" id="PRO_0000220899" description="Transmembrane protein 33">
    <location>
        <begin position="2"/>
        <end position="247"/>
    </location>
</feature>
<feature type="topological domain" description="Lumenal" evidence="11">
    <location>
        <begin position="2"/>
        <end position="31"/>
    </location>
</feature>
<feature type="transmembrane region" description="Helical" evidence="2">
    <location>
        <begin position="32"/>
        <end position="52"/>
    </location>
</feature>
<feature type="topological domain" description="Cytoplasmic" evidence="11">
    <location>
        <begin position="53"/>
        <end position="100"/>
    </location>
</feature>
<feature type="transmembrane region" description="Helical" evidence="2">
    <location>
        <begin position="101"/>
        <end position="121"/>
    </location>
</feature>
<feature type="topological domain" description="Lumenal" evidence="11">
    <location>
        <begin position="122"/>
        <end position="155"/>
    </location>
</feature>
<feature type="transmembrane region" description="Helical" evidence="2">
    <location>
        <begin position="156"/>
        <end position="176"/>
    </location>
</feature>
<feature type="topological domain" description="Cytoplasmic" evidence="11">
    <location>
        <begin position="177"/>
        <end position="247"/>
    </location>
</feature>
<feature type="modified residue" description="N-acetylalanine" evidence="12">
    <location>
        <position position="2"/>
    </location>
</feature>
<feature type="sequence conflict" description="In Ref. 1; BAA91665." evidence="10" ref="1">
    <original>N</original>
    <variation>S</variation>
    <location>
        <position position="7"/>
    </location>
</feature>
<dbReference type="EMBL" id="AK001387">
    <property type="protein sequence ID" value="BAA91665.1"/>
    <property type="molecule type" value="mRNA"/>
</dbReference>
<dbReference type="EMBL" id="AK023062">
    <property type="protein sequence ID" value="BAB14384.1"/>
    <property type="molecule type" value="mRNA"/>
</dbReference>
<dbReference type="EMBL" id="AK094190">
    <property type="protein sequence ID" value="BAG52840.1"/>
    <property type="molecule type" value="mRNA"/>
</dbReference>
<dbReference type="EMBL" id="CR457260">
    <property type="protein sequence ID" value="CAG33541.1"/>
    <property type="molecule type" value="mRNA"/>
</dbReference>
<dbReference type="EMBL" id="CH471069">
    <property type="protein sequence ID" value="EAW92991.1"/>
    <property type="molecule type" value="Genomic_DNA"/>
</dbReference>
<dbReference type="EMBL" id="BC000948">
    <property type="protein sequence ID" value="AAH00948.2"/>
    <property type="molecule type" value="mRNA"/>
</dbReference>
<dbReference type="CCDS" id="CCDS3464.1"/>
<dbReference type="RefSeq" id="NP_060596.2">
    <property type="nucleotide sequence ID" value="NM_018126.3"/>
</dbReference>
<dbReference type="RefSeq" id="XP_005248173.1">
    <property type="nucleotide sequence ID" value="XM_005248116.5"/>
</dbReference>
<dbReference type="RefSeq" id="XP_005248174.1">
    <property type="nucleotide sequence ID" value="XM_005248117.3"/>
</dbReference>
<dbReference type="RefSeq" id="XP_054206345.1">
    <property type="nucleotide sequence ID" value="XM_054350370.1"/>
</dbReference>
<dbReference type="RefSeq" id="XP_054206346.1">
    <property type="nucleotide sequence ID" value="XM_054350371.1"/>
</dbReference>
<dbReference type="RefSeq" id="XP_054206347.1">
    <property type="nucleotide sequence ID" value="XM_054350372.1"/>
</dbReference>
<dbReference type="SMR" id="P57088"/>
<dbReference type="BioGRID" id="120462">
    <property type="interactions" value="187"/>
</dbReference>
<dbReference type="FunCoup" id="P57088">
    <property type="interactions" value="2002"/>
</dbReference>
<dbReference type="IntAct" id="P57088">
    <property type="interactions" value="89"/>
</dbReference>
<dbReference type="MINT" id="P57088"/>
<dbReference type="STRING" id="9606.ENSP00000422473"/>
<dbReference type="TCDB" id="8.A.124.1.3">
    <property type="family name" value="the tetra spanning protein 1 (tts1) family"/>
</dbReference>
<dbReference type="GlyGen" id="P57088">
    <property type="glycosylation" value="1 site, 1 O-linked glycan (1 site)"/>
</dbReference>
<dbReference type="iPTMnet" id="P57088"/>
<dbReference type="PhosphoSitePlus" id="P57088"/>
<dbReference type="SwissPalm" id="P57088"/>
<dbReference type="BioMuta" id="TMEM33"/>
<dbReference type="DMDM" id="23503056"/>
<dbReference type="jPOST" id="P57088"/>
<dbReference type="MassIVE" id="P57088"/>
<dbReference type="PaxDb" id="9606-ENSP00000422473"/>
<dbReference type="PeptideAtlas" id="P57088"/>
<dbReference type="ProteomicsDB" id="56997"/>
<dbReference type="Pumba" id="P57088"/>
<dbReference type="TopDownProteomics" id="P57088"/>
<dbReference type="Antibodypedia" id="60901">
    <property type="antibodies" value="89 antibodies from 19 providers"/>
</dbReference>
<dbReference type="DNASU" id="55161"/>
<dbReference type="Ensembl" id="ENST00000504986.6">
    <property type="protein sequence ID" value="ENSP00000422473.1"/>
    <property type="gene ID" value="ENSG00000109133.14"/>
</dbReference>
<dbReference type="Ensembl" id="ENST00000513702.5">
    <property type="protein sequence ID" value="ENSP00000427006.1"/>
    <property type="gene ID" value="ENSG00000109133.14"/>
</dbReference>
<dbReference type="GeneID" id="55161"/>
<dbReference type="KEGG" id="hsa:55161"/>
<dbReference type="MANE-Select" id="ENST00000504986.6">
    <property type="protein sequence ID" value="ENSP00000422473.1"/>
    <property type="RefSeq nucleotide sequence ID" value="NM_018126.3"/>
    <property type="RefSeq protein sequence ID" value="NP_060596.2"/>
</dbReference>
<dbReference type="UCSC" id="uc003gwi.3">
    <property type="organism name" value="human"/>
</dbReference>
<dbReference type="AGR" id="HGNC:25541"/>
<dbReference type="CTD" id="55161"/>
<dbReference type="DisGeNET" id="55161"/>
<dbReference type="GeneCards" id="TMEM33"/>
<dbReference type="HGNC" id="HGNC:25541">
    <property type="gene designation" value="TMEM33"/>
</dbReference>
<dbReference type="HPA" id="ENSG00000109133">
    <property type="expression patterns" value="Low tissue specificity"/>
</dbReference>
<dbReference type="MIM" id="618515">
    <property type="type" value="gene"/>
</dbReference>
<dbReference type="neXtProt" id="NX_P57088"/>
<dbReference type="OpenTargets" id="ENSG00000109133"/>
<dbReference type="PharmGKB" id="PA134963055"/>
<dbReference type="VEuPathDB" id="HostDB:ENSG00000109133"/>
<dbReference type="eggNOG" id="KOG4002">
    <property type="taxonomic scope" value="Eukaryota"/>
</dbReference>
<dbReference type="GeneTree" id="ENSGT00390000011368"/>
<dbReference type="InParanoid" id="P57088"/>
<dbReference type="OMA" id="FFSIRPT"/>
<dbReference type="OrthoDB" id="5581259at2759"/>
<dbReference type="PAN-GO" id="P57088">
    <property type="GO annotations" value="3 GO annotations based on evolutionary models"/>
</dbReference>
<dbReference type="PhylomeDB" id="P57088"/>
<dbReference type="TreeFam" id="TF314068"/>
<dbReference type="PathwayCommons" id="P57088"/>
<dbReference type="SignaLink" id="P57088"/>
<dbReference type="BioGRID-ORCS" id="55161">
    <property type="hits" value="11 hits in 1155 CRISPR screens"/>
</dbReference>
<dbReference type="ChiTaRS" id="TMEM33">
    <property type="organism name" value="human"/>
</dbReference>
<dbReference type="GenomeRNAi" id="55161"/>
<dbReference type="Pharos" id="P57088">
    <property type="development level" value="Tbio"/>
</dbReference>
<dbReference type="PRO" id="PR:P57088"/>
<dbReference type="Proteomes" id="UP000005640">
    <property type="component" value="Chromosome 4"/>
</dbReference>
<dbReference type="RNAct" id="P57088">
    <property type="molecule type" value="protein"/>
</dbReference>
<dbReference type="Bgee" id="ENSG00000109133">
    <property type="expression patterns" value="Expressed in adrenal tissue and 202 other cell types or tissues"/>
</dbReference>
<dbReference type="ExpressionAtlas" id="P57088">
    <property type="expression patterns" value="baseline and differential"/>
</dbReference>
<dbReference type="GO" id="GO:0005783">
    <property type="term" value="C:endoplasmic reticulum"/>
    <property type="evidence" value="ECO:0000314"/>
    <property type="project" value="AgBase"/>
</dbReference>
<dbReference type="GO" id="GO:0005789">
    <property type="term" value="C:endoplasmic reticulum membrane"/>
    <property type="evidence" value="ECO:0000314"/>
    <property type="project" value="UniProtKB"/>
</dbReference>
<dbReference type="GO" id="GO:0042470">
    <property type="term" value="C:melanosome"/>
    <property type="evidence" value="ECO:0000314"/>
    <property type="project" value="UniProtKB"/>
</dbReference>
<dbReference type="GO" id="GO:0005635">
    <property type="term" value="C:nuclear envelope"/>
    <property type="evidence" value="ECO:0000314"/>
    <property type="project" value="AgBase"/>
</dbReference>
<dbReference type="GO" id="GO:0071786">
    <property type="term" value="P:endoplasmic reticulum tubular network organization"/>
    <property type="evidence" value="ECO:0000318"/>
    <property type="project" value="GO_Central"/>
</dbReference>
<dbReference type="GO" id="GO:0045087">
    <property type="term" value="P:innate immune response"/>
    <property type="evidence" value="ECO:0007669"/>
    <property type="project" value="UniProtKB-KW"/>
</dbReference>
<dbReference type="GO" id="GO:0061024">
    <property type="term" value="P:membrane organization"/>
    <property type="evidence" value="ECO:0000318"/>
    <property type="project" value="GO_Central"/>
</dbReference>
<dbReference type="GO" id="GO:1903896">
    <property type="term" value="P:positive regulation of IRE1-mediated unfolded protein response"/>
    <property type="evidence" value="ECO:0000314"/>
    <property type="project" value="UniProtKB"/>
</dbReference>
<dbReference type="GO" id="GO:1903899">
    <property type="term" value="P:positive regulation of PERK-mediated unfolded protein response"/>
    <property type="evidence" value="ECO:0000314"/>
    <property type="project" value="UniProtKB"/>
</dbReference>
<dbReference type="GO" id="GO:1903371">
    <property type="term" value="P:regulation of endoplasmic reticulum tubular network organization"/>
    <property type="evidence" value="ECO:0000314"/>
    <property type="project" value="UniProtKB"/>
</dbReference>
<dbReference type="GO" id="GO:0034976">
    <property type="term" value="P:response to endoplasmic reticulum stress"/>
    <property type="evidence" value="ECO:0000314"/>
    <property type="project" value="UniProtKB"/>
</dbReference>
<dbReference type="InterPro" id="IPR051645">
    <property type="entry name" value="PER33/POM33_regulator"/>
</dbReference>
<dbReference type="InterPro" id="IPR005344">
    <property type="entry name" value="TMEM33/Pom33"/>
</dbReference>
<dbReference type="PANTHER" id="PTHR12703">
    <property type="entry name" value="TRANSMEMBRANE PROTEIN 33"/>
    <property type="match status" value="1"/>
</dbReference>
<dbReference type="PANTHER" id="PTHR12703:SF4">
    <property type="entry name" value="TRANSMEMBRANE PROTEIN 33"/>
    <property type="match status" value="1"/>
</dbReference>
<dbReference type="Pfam" id="PF03661">
    <property type="entry name" value="TMEM33_Pom33"/>
    <property type="match status" value="1"/>
</dbReference>
<sequence>MADTTPNGPQGAGAVQFMMTNKLDTAMWLSRLFTVYCSALFVLPLLGLHEAASFYQRALLANALTSALRLHQRLPHFQLSRAFLAQALLEDSCHYLLYSLIFVNSYPVTMSIFPVLLFSLLHAATYTKKVLDARGSNSLPLLRSVLDKLSANQQNILKFIACNEIFLMPATVFMLFSGQGSLLQPFIYYRFLTLRYSSRRNPYCRTLFNELRIVVEHIIMKPACPLFVRRLCLQSIAFISRLAPTVP</sequence>
<protein>
    <recommendedName>
        <fullName>Transmembrane protein 33</fullName>
    </recommendedName>
    <alternativeName>
        <fullName>Protein DB83</fullName>
    </alternativeName>
    <alternativeName>
        <fullName evidence="9">SHINC-3</fullName>
    </alternativeName>
</protein>
<name>TMM33_HUMAN</name>